<sequence>MKVLNSLRTAKERHPDCQIVKRKGRLYVICKSNPRFKAVQGRKKKR</sequence>
<evidence type="ECO:0000269" key="1">
    <source>
    </source>
</evidence>
<evidence type="ECO:0000269" key="2">
    <source>
    </source>
</evidence>
<evidence type="ECO:0000303" key="3">
    <source>
    </source>
</evidence>
<evidence type="ECO:0000305" key="4"/>
<organism>
    <name type="scientific">Escherichia coli (strain K12)</name>
    <dbReference type="NCBI Taxonomy" id="83333"/>
    <lineage>
        <taxon>Bacteria</taxon>
        <taxon>Pseudomonadati</taxon>
        <taxon>Pseudomonadota</taxon>
        <taxon>Gammaproteobacteria</taxon>
        <taxon>Enterobacterales</taxon>
        <taxon>Enterobacteriaceae</taxon>
        <taxon>Escherichia</taxon>
    </lineage>
</organism>
<reference key="1">
    <citation type="journal article" date="1997" name="Science">
        <title>The complete genome sequence of Escherichia coli K-12.</title>
        <authorList>
            <person name="Blattner F.R."/>
            <person name="Plunkett G. III"/>
            <person name="Bloch C.A."/>
            <person name="Perna N.T."/>
            <person name="Burland V."/>
            <person name="Riley M."/>
            <person name="Collado-Vides J."/>
            <person name="Glasner J.D."/>
            <person name="Rode C.K."/>
            <person name="Mayhew G.F."/>
            <person name="Gregor J."/>
            <person name="Davis N.W."/>
            <person name="Kirkpatrick H.A."/>
            <person name="Goeden M.A."/>
            <person name="Rose D.J."/>
            <person name="Mau B."/>
            <person name="Shao Y."/>
        </authorList>
    </citation>
    <scope>NUCLEOTIDE SEQUENCE [LARGE SCALE GENOMIC DNA]</scope>
    <source>
        <strain>K12 / MG1655 / ATCC 47076</strain>
    </source>
</reference>
<reference key="2">
    <citation type="journal article" date="2006" name="Mol. Syst. Biol.">
        <title>Highly accurate genome sequences of Escherichia coli K-12 strains MG1655 and W3110.</title>
        <authorList>
            <person name="Hayashi K."/>
            <person name="Morooka N."/>
            <person name="Yamamoto Y."/>
            <person name="Fujita K."/>
            <person name="Isono K."/>
            <person name="Choi S."/>
            <person name="Ohtsubo E."/>
            <person name="Baba T."/>
            <person name="Wanner B.L."/>
            <person name="Mori H."/>
            <person name="Horiuchi T."/>
        </authorList>
    </citation>
    <scope>NUCLEOTIDE SEQUENCE [LARGE SCALE GENOMIC DNA]</scope>
    <source>
        <strain>K12 / W3110 / ATCC 27325 / DSM 5911</strain>
    </source>
</reference>
<reference key="3">
    <citation type="journal article" date="2008" name="Mol. Microbiol.">
        <title>Small membrane proteins found by comparative genomics and ribosome binding site models.</title>
        <authorList>
            <person name="Hemm M.R."/>
            <person name="Paul B.J."/>
            <person name="Schneider T.D."/>
            <person name="Storz G."/>
            <person name="Rudd K.E."/>
        </authorList>
    </citation>
    <scope>INDUCTION</scope>
    <source>
        <strain>K12 / MG1655 / ATCC 47076</strain>
    </source>
</reference>
<reference key="4">
    <citation type="journal article" date="2010" name="J. Bacteriol.">
        <title>Small stress response proteins in Escherichia coli: proteins missed by classical proteomic studies.</title>
        <authorList>
            <person name="Hemm M.R."/>
            <person name="Paul B.J."/>
            <person name="Miranda-Rios J."/>
            <person name="Zhang A."/>
            <person name="Soltanzad N."/>
            <person name="Storz G."/>
        </authorList>
    </citation>
    <scope>INDUCTION</scope>
    <scope>OPERON STRUCTURE</scope>
    <source>
        <strain>K12 / MG1655 / ATCC 47076</strain>
    </source>
</reference>
<reference key="5">
    <citation type="journal article" date="2014" name="Curr. Opin. Struct. Biol.">
        <title>A new system for naming ribosomal proteins.</title>
        <authorList>
            <person name="Ban N."/>
            <person name="Beckmann R."/>
            <person name="Cate J.H.D."/>
            <person name="Dinman J.D."/>
            <person name="Dragon F."/>
            <person name="Ellis S.R."/>
            <person name="Lafontaine D.L.J."/>
            <person name="Lindahl L."/>
            <person name="Liljas A."/>
            <person name="Lipton J.M."/>
            <person name="McAlear M.A."/>
            <person name="Moore P.B."/>
            <person name="Noller H.F."/>
            <person name="Ortega J."/>
            <person name="Panse V.G."/>
            <person name="Ramakrishnan V."/>
            <person name="Spahn C.M.T."/>
            <person name="Steitz T.A."/>
            <person name="Tchorzewski M."/>
            <person name="Tollervey D."/>
            <person name="Warren A.J."/>
            <person name="Williamson J.R."/>
            <person name="Wilson D."/>
            <person name="Yonath A."/>
            <person name="Yusupov M."/>
        </authorList>
    </citation>
    <scope>NOMENCLATURE</scope>
</reference>
<feature type="chain" id="PRO_0000246680" description="Large ribosomal subunit protein bL36B">
    <location>
        <begin position="1"/>
        <end position="46"/>
    </location>
</feature>
<accession>Q2EEQ2</accession>
<accession>Q2MCC6</accession>
<name>RL362_ECOLI</name>
<proteinExistence type="evidence at protein level"/>
<gene>
    <name type="primary">ykgO</name>
    <name type="synonym">rpmJ2</name>
    <name type="ordered locus">b4506</name>
    <name type="ordered locus">JW5034</name>
</gene>
<protein>
    <recommendedName>
        <fullName evidence="3">Large ribosomal subunit protein bL36B</fullName>
    </recommendedName>
    <alternativeName>
        <fullName>50S ribosomal protein L36 2</fullName>
    </alternativeName>
</protein>
<comment type="induction">
    <text evidence="1 2">Expressed during stationary phase in minimal glucose medium (PubMed:19121005), induced by EDTA, strongly repressed on shifting from minimal glucose to minimal glycerol medium (at protein level). Induced under zinc-limiting conditions in stationary phase; repressed by the zinc uptake regulatory protein Zur.</text>
</comment>
<comment type="similarity">
    <text evidence="4">Belongs to the bacterial ribosomal protein bL36 family.</text>
</comment>
<keyword id="KW-0002">3D-structure</keyword>
<keyword id="KW-1185">Reference proteome</keyword>
<keyword id="KW-0687">Ribonucleoprotein</keyword>
<keyword id="KW-0689">Ribosomal protein</keyword>
<keyword id="KW-0346">Stress response</keyword>
<dbReference type="EMBL" id="U00096">
    <property type="protein sequence ID" value="ABD18636.1"/>
    <property type="molecule type" value="Genomic_DNA"/>
</dbReference>
<dbReference type="EMBL" id="AP009048">
    <property type="protein sequence ID" value="BAE76080.1"/>
    <property type="molecule type" value="Genomic_DNA"/>
</dbReference>
<dbReference type="RefSeq" id="WP_000866436.1">
    <property type="nucleotide sequence ID" value="NZ_STEB01000020.1"/>
</dbReference>
<dbReference type="RefSeq" id="YP_588437.1">
    <property type="nucleotide sequence ID" value="NC_000913.3"/>
</dbReference>
<dbReference type="PDB" id="6I7V">
    <property type="method" value="X-ray"/>
    <property type="resolution" value="2.90 A"/>
    <property type="chains" value="C5/D5=1-45"/>
</dbReference>
<dbReference type="PDBsum" id="6I7V"/>
<dbReference type="SMR" id="Q2EEQ2"/>
<dbReference type="FunCoup" id="Q2EEQ2">
    <property type="interactions" value="59"/>
</dbReference>
<dbReference type="STRING" id="511145.b4506"/>
<dbReference type="PaxDb" id="511145-b4506"/>
<dbReference type="EnsemblBacteria" id="ABD18636">
    <property type="protein sequence ID" value="ABD18636"/>
    <property type="gene ID" value="b4506"/>
</dbReference>
<dbReference type="GeneID" id="1450238"/>
<dbReference type="GeneID" id="86945208"/>
<dbReference type="KEGG" id="ecj:JW5034"/>
<dbReference type="KEGG" id="eco:b4506"/>
<dbReference type="KEGG" id="ecoc:C3026_01445"/>
<dbReference type="KEGG" id="ecoc:C3026_24075"/>
<dbReference type="PATRIC" id="fig|1411691.4.peg.1983"/>
<dbReference type="eggNOG" id="COG0257">
    <property type="taxonomic scope" value="Bacteria"/>
</dbReference>
<dbReference type="HOGENOM" id="CLU_135723_3_1_6"/>
<dbReference type="InParanoid" id="Q2EEQ2"/>
<dbReference type="OrthoDB" id="9801558at2"/>
<dbReference type="PhylomeDB" id="Q2EEQ2"/>
<dbReference type="BioCyc" id="EcoCyc:MONOMER0-2656"/>
<dbReference type="PRO" id="PR:Q2EEQ2"/>
<dbReference type="Proteomes" id="UP000000625">
    <property type="component" value="Chromosome"/>
</dbReference>
<dbReference type="GO" id="GO:0022626">
    <property type="term" value="C:cytosolic ribosome"/>
    <property type="evidence" value="ECO:0000314"/>
    <property type="project" value="EcoCyc"/>
</dbReference>
<dbReference type="GO" id="GO:1990904">
    <property type="term" value="C:ribonucleoprotein complex"/>
    <property type="evidence" value="ECO:0007669"/>
    <property type="project" value="UniProtKB-KW"/>
</dbReference>
<dbReference type="GO" id="GO:0003735">
    <property type="term" value="F:structural constituent of ribosome"/>
    <property type="evidence" value="ECO:0000314"/>
    <property type="project" value="EcoCyc"/>
</dbReference>
<dbReference type="GO" id="GO:0006412">
    <property type="term" value="P:translation"/>
    <property type="evidence" value="ECO:0000314"/>
    <property type="project" value="EcoCyc"/>
</dbReference>
<dbReference type="HAMAP" id="MF_00251">
    <property type="entry name" value="Ribosomal_bL36"/>
    <property type="match status" value="1"/>
</dbReference>
<dbReference type="InterPro" id="IPR000473">
    <property type="entry name" value="Ribosomal_bL36"/>
</dbReference>
<dbReference type="InterPro" id="IPR035977">
    <property type="entry name" value="Ribosomal_bL36_sp"/>
</dbReference>
<dbReference type="InterPro" id="IPR047621">
    <property type="entry name" value="Ribosomal_L36_bact"/>
</dbReference>
<dbReference type="NCBIfam" id="NF002021">
    <property type="entry name" value="PRK00831.1"/>
    <property type="match status" value="1"/>
</dbReference>
<dbReference type="NCBIfam" id="TIGR01022">
    <property type="entry name" value="rpmJ_bact"/>
    <property type="match status" value="1"/>
</dbReference>
<dbReference type="PANTHER" id="PTHR47781">
    <property type="entry name" value="50S RIBOSOMAL PROTEIN L36 2"/>
    <property type="match status" value="1"/>
</dbReference>
<dbReference type="PANTHER" id="PTHR47781:SF1">
    <property type="entry name" value="LARGE RIBOSOMAL SUBUNIT PROTEIN BL36B"/>
    <property type="match status" value="1"/>
</dbReference>
<dbReference type="Pfam" id="PF00444">
    <property type="entry name" value="Ribosomal_L36"/>
    <property type="match status" value="1"/>
</dbReference>
<dbReference type="SUPFAM" id="SSF57840">
    <property type="entry name" value="Ribosomal protein L36"/>
    <property type="match status" value="1"/>
</dbReference>
<dbReference type="PROSITE" id="PS00828">
    <property type="entry name" value="RIBOSOMAL_L36"/>
    <property type="match status" value="1"/>
</dbReference>